<evidence type="ECO:0000255" key="1">
    <source>
        <dbReference type="HAMAP-Rule" id="MF_00082"/>
    </source>
</evidence>
<protein>
    <recommendedName>
        <fullName evidence="1">Acetylglutamate kinase</fullName>
        <ecNumber evidence="1">2.7.2.8</ecNumber>
    </recommendedName>
    <alternativeName>
        <fullName evidence="1">N-acetyl-L-glutamate 5-phosphotransferase</fullName>
    </alternativeName>
    <alternativeName>
        <fullName evidence="1">NAG kinase</fullName>
        <shortName evidence="1">NAGK</shortName>
    </alternativeName>
</protein>
<gene>
    <name evidence="1" type="primary">argB</name>
    <name type="ordered locus">Gmet_0203</name>
</gene>
<keyword id="KW-0028">Amino-acid biosynthesis</keyword>
<keyword id="KW-0055">Arginine biosynthesis</keyword>
<keyword id="KW-0067">ATP-binding</keyword>
<keyword id="KW-0963">Cytoplasm</keyword>
<keyword id="KW-0418">Kinase</keyword>
<keyword id="KW-0547">Nucleotide-binding</keyword>
<keyword id="KW-1185">Reference proteome</keyword>
<keyword id="KW-0808">Transferase</keyword>
<feature type="chain" id="PRO_0000264710" description="Acetylglutamate kinase">
    <location>
        <begin position="1"/>
        <end position="292"/>
    </location>
</feature>
<feature type="binding site" evidence="1">
    <location>
        <begin position="64"/>
        <end position="65"/>
    </location>
    <ligand>
        <name>substrate</name>
    </ligand>
</feature>
<feature type="binding site" evidence="1">
    <location>
        <position position="86"/>
    </location>
    <ligand>
        <name>substrate</name>
    </ligand>
</feature>
<feature type="binding site" evidence="1">
    <location>
        <position position="190"/>
    </location>
    <ligand>
        <name>substrate</name>
    </ligand>
</feature>
<feature type="site" description="Transition state stabilizer" evidence="1">
    <location>
        <position position="29"/>
    </location>
</feature>
<feature type="site" description="Transition state stabilizer" evidence="1">
    <location>
        <position position="250"/>
    </location>
</feature>
<accession>Q39Z75</accession>
<organism>
    <name type="scientific">Geobacter metallireducens (strain ATCC 53774 / DSM 7210 / GS-15)</name>
    <dbReference type="NCBI Taxonomy" id="269799"/>
    <lineage>
        <taxon>Bacteria</taxon>
        <taxon>Pseudomonadati</taxon>
        <taxon>Thermodesulfobacteriota</taxon>
        <taxon>Desulfuromonadia</taxon>
        <taxon>Geobacterales</taxon>
        <taxon>Geobacteraceae</taxon>
        <taxon>Geobacter</taxon>
    </lineage>
</organism>
<sequence length="292" mass="31170">MQHLIEKANTLMEALPYIRRFSGKTIVIKYGGHAMSDEALKKSFALDVILLKSLGINTVVVHGGGPQINETLKRYGIVSEFVRGMRVTDAATMQVVEMVLTGQVNKEVVGYLNQHGGRAVGLSGKDGSLLLCRKLLQEVKQGDGSLEKVDIGFVGDVVKVNQELIQTLEHGKFIPVIAPVGVGEDGESYNVNADLVAGRVAGALKAEKLILLTDVEGVKDKAGELIPGIVLDDVPRLIDGGVITGGMIPKVTCCVDAIEEGVKKASIIDGRVLHAVLLEIFTDVGVGTEIRR</sequence>
<name>ARGB_GEOMG</name>
<comment type="function">
    <text evidence="1">Catalyzes the ATP-dependent phosphorylation of N-acetyl-L-glutamate.</text>
</comment>
<comment type="catalytic activity">
    <reaction evidence="1">
        <text>N-acetyl-L-glutamate + ATP = N-acetyl-L-glutamyl 5-phosphate + ADP</text>
        <dbReference type="Rhea" id="RHEA:14629"/>
        <dbReference type="ChEBI" id="CHEBI:30616"/>
        <dbReference type="ChEBI" id="CHEBI:44337"/>
        <dbReference type="ChEBI" id="CHEBI:57936"/>
        <dbReference type="ChEBI" id="CHEBI:456216"/>
        <dbReference type="EC" id="2.7.2.8"/>
    </reaction>
</comment>
<comment type="pathway">
    <text evidence="1">Amino-acid biosynthesis; L-arginine biosynthesis; N(2)-acetyl-L-ornithine from L-glutamate: step 2/4.</text>
</comment>
<comment type="subcellular location">
    <subcellularLocation>
        <location evidence="1">Cytoplasm</location>
    </subcellularLocation>
</comment>
<comment type="similarity">
    <text evidence="1">Belongs to the acetylglutamate kinase family. ArgB subfamily.</text>
</comment>
<proteinExistence type="inferred from homology"/>
<reference key="1">
    <citation type="journal article" date="2009" name="BMC Microbiol.">
        <title>The genome sequence of Geobacter metallireducens: features of metabolism, physiology and regulation common and dissimilar to Geobacter sulfurreducens.</title>
        <authorList>
            <person name="Aklujkar M."/>
            <person name="Krushkal J."/>
            <person name="DiBartolo G."/>
            <person name="Lapidus A."/>
            <person name="Land M.L."/>
            <person name="Lovley D.R."/>
        </authorList>
    </citation>
    <scope>NUCLEOTIDE SEQUENCE [LARGE SCALE GENOMIC DNA]</scope>
    <source>
        <strain>ATCC 53774 / DSM 7210 / GS-15</strain>
    </source>
</reference>
<dbReference type="EC" id="2.7.2.8" evidence="1"/>
<dbReference type="EMBL" id="CP000148">
    <property type="protein sequence ID" value="ABB30449.1"/>
    <property type="molecule type" value="Genomic_DNA"/>
</dbReference>
<dbReference type="RefSeq" id="WP_004512792.1">
    <property type="nucleotide sequence ID" value="NC_007517.1"/>
</dbReference>
<dbReference type="SMR" id="Q39Z75"/>
<dbReference type="STRING" id="269799.Gmet_0203"/>
<dbReference type="KEGG" id="gme:Gmet_0203"/>
<dbReference type="eggNOG" id="COG0548">
    <property type="taxonomic scope" value="Bacteria"/>
</dbReference>
<dbReference type="HOGENOM" id="CLU_053680_0_0_7"/>
<dbReference type="UniPathway" id="UPA00068">
    <property type="reaction ID" value="UER00107"/>
</dbReference>
<dbReference type="Proteomes" id="UP000007073">
    <property type="component" value="Chromosome"/>
</dbReference>
<dbReference type="GO" id="GO:0005737">
    <property type="term" value="C:cytoplasm"/>
    <property type="evidence" value="ECO:0007669"/>
    <property type="project" value="UniProtKB-SubCell"/>
</dbReference>
<dbReference type="GO" id="GO:0003991">
    <property type="term" value="F:acetylglutamate kinase activity"/>
    <property type="evidence" value="ECO:0007669"/>
    <property type="project" value="UniProtKB-UniRule"/>
</dbReference>
<dbReference type="GO" id="GO:0005524">
    <property type="term" value="F:ATP binding"/>
    <property type="evidence" value="ECO:0007669"/>
    <property type="project" value="UniProtKB-UniRule"/>
</dbReference>
<dbReference type="GO" id="GO:0042450">
    <property type="term" value="P:arginine biosynthetic process via ornithine"/>
    <property type="evidence" value="ECO:0007669"/>
    <property type="project" value="UniProtKB-UniRule"/>
</dbReference>
<dbReference type="GO" id="GO:0006526">
    <property type="term" value="P:L-arginine biosynthetic process"/>
    <property type="evidence" value="ECO:0007669"/>
    <property type="project" value="UniProtKB-UniPathway"/>
</dbReference>
<dbReference type="CDD" id="cd04250">
    <property type="entry name" value="AAK_NAGK-C"/>
    <property type="match status" value="1"/>
</dbReference>
<dbReference type="FunFam" id="3.40.1160.10:FF:000004">
    <property type="entry name" value="Acetylglutamate kinase"/>
    <property type="match status" value="1"/>
</dbReference>
<dbReference type="Gene3D" id="3.40.1160.10">
    <property type="entry name" value="Acetylglutamate kinase-like"/>
    <property type="match status" value="1"/>
</dbReference>
<dbReference type="HAMAP" id="MF_00082">
    <property type="entry name" value="ArgB"/>
    <property type="match status" value="1"/>
</dbReference>
<dbReference type="InterPro" id="IPR036393">
    <property type="entry name" value="AceGlu_kinase-like_sf"/>
</dbReference>
<dbReference type="InterPro" id="IPR004662">
    <property type="entry name" value="AcgluKinase_fam"/>
</dbReference>
<dbReference type="InterPro" id="IPR037528">
    <property type="entry name" value="ArgB"/>
</dbReference>
<dbReference type="InterPro" id="IPR001048">
    <property type="entry name" value="Asp/Glu/Uridylate_kinase"/>
</dbReference>
<dbReference type="InterPro" id="IPR001057">
    <property type="entry name" value="Glu/AcGlu_kinase"/>
</dbReference>
<dbReference type="InterPro" id="IPR041727">
    <property type="entry name" value="NAGK-C"/>
</dbReference>
<dbReference type="NCBIfam" id="TIGR00761">
    <property type="entry name" value="argB"/>
    <property type="match status" value="1"/>
</dbReference>
<dbReference type="PANTHER" id="PTHR23342">
    <property type="entry name" value="N-ACETYLGLUTAMATE SYNTHASE"/>
    <property type="match status" value="1"/>
</dbReference>
<dbReference type="PANTHER" id="PTHR23342:SF0">
    <property type="entry name" value="N-ACETYLGLUTAMATE SYNTHASE, MITOCHONDRIAL"/>
    <property type="match status" value="1"/>
</dbReference>
<dbReference type="Pfam" id="PF00696">
    <property type="entry name" value="AA_kinase"/>
    <property type="match status" value="1"/>
</dbReference>
<dbReference type="PIRSF" id="PIRSF000728">
    <property type="entry name" value="NAGK"/>
    <property type="match status" value="1"/>
</dbReference>
<dbReference type="PRINTS" id="PR00474">
    <property type="entry name" value="GLU5KINASE"/>
</dbReference>
<dbReference type="SUPFAM" id="SSF53633">
    <property type="entry name" value="Carbamate kinase-like"/>
    <property type="match status" value="1"/>
</dbReference>